<keyword id="KW-0539">Nucleus</keyword>
<keyword id="KW-1185">Reference proteome</keyword>
<name>CA174_XENLA</name>
<reference key="1">
    <citation type="submission" date="2005-10" db="EMBL/GenBank/DDBJ databases">
        <authorList>
            <consortium name="NIH - Xenopus Gene Collection (XGC) project"/>
        </authorList>
    </citation>
    <scope>NUCLEOTIDE SEQUENCE [LARGE SCALE MRNA]</scope>
    <source>
        <tissue>Egg</tissue>
    </source>
</reference>
<feature type="chain" id="PRO_0000294247" description="UPF0688 protein C1orf174 homolog">
    <location>
        <begin position="1"/>
        <end position="205"/>
    </location>
</feature>
<feature type="region of interest" description="Disordered" evidence="2">
    <location>
        <begin position="1"/>
        <end position="128"/>
    </location>
</feature>
<feature type="region of interest" description="Disordered" evidence="2">
    <location>
        <begin position="184"/>
        <end position="205"/>
    </location>
</feature>
<feature type="compositionally biased region" description="Basic residues" evidence="2">
    <location>
        <begin position="1"/>
        <end position="18"/>
    </location>
</feature>
<feature type="compositionally biased region" description="Basic and acidic residues" evidence="2">
    <location>
        <begin position="46"/>
        <end position="63"/>
    </location>
</feature>
<feature type="compositionally biased region" description="Polar residues" evidence="2">
    <location>
        <begin position="71"/>
        <end position="108"/>
    </location>
</feature>
<feature type="compositionally biased region" description="Acidic residues" evidence="2">
    <location>
        <begin position="187"/>
        <end position="196"/>
    </location>
</feature>
<evidence type="ECO:0000250" key="1"/>
<evidence type="ECO:0000256" key="2">
    <source>
        <dbReference type="SAM" id="MobiDB-lite"/>
    </source>
</evidence>
<evidence type="ECO:0000305" key="3"/>
<protein>
    <recommendedName>
        <fullName>UPF0688 protein C1orf174 homolog</fullName>
    </recommendedName>
</protein>
<proteinExistence type="evidence at transcript level"/>
<organism>
    <name type="scientific">Xenopus laevis</name>
    <name type="common">African clawed frog</name>
    <dbReference type="NCBI Taxonomy" id="8355"/>
    <lineage>
        <taxon>Eukaryota</taxon>
        <taxon>Metazoa</taxon>
        <taxon>Chordata</taxon>
        <taxon>Craniata</taxon>
        <taxon>Vertebrata</taxon>
        <taxon>Euteleostomi</taxon>
        <taxon>Amphibia</taxon>
        <taxon>Batrachia</taxon>
        <taxon>Anura</taxon>
        <taxon>Pipoidea</taxon>
        <taxon>Pipidae</taxon>
        <taxon>Xenopodinae</taxon>
        <taxon>Xenopus</taxon>
        <taxon>Xenopus</taxon>
    </lineage>
</organism>
<accession>Q3KQW6</accession>
<comment type="subcellular location">
    <subcellularLocation>
        <location evidence="1">Nucleus</location>
    </subcellularLocation>
</comment>
<comment type="similarity">
    <text evidence="3">Belongs to the UPF0688 family.</text>
</comment>
<dbReference type="EMBL" id="BC106027">
    <property type="protein sequence ID" value="AAI06028.1"/>
    <property type="molecule type" value="mRNA"/>
</dbReference>
<dbReference type="RefSeq" id="NP_001089676.1">
    <property type="nucleotide sequence ID" value="NM_001096207.1"/>
</dbReference>
<dbReference type="DNASU" id="734737"/>
<dbReference type="GeneID" id="734737"/>
<dbReference type="KEGG" id="xla:734737"/>
<dbReference type="AGR" id="Xenbase:XB-GENE-17343529"/>
<dbReference type="CTD" id="734737"/>
<dbReference type="Xenbase" id="XB-GENE-17343529">
    <property type="gene designation" value="c7h1orf174.L"/>
</dbReference>
<dbReference type="OrthoDB" id="8730115at2759"/>
<dbReference type="Proteomes" id="UP000186698">
    <property type="component" value="Chromosome 7L"/>
</dbReference>
<dbReference type="Bgee" id="734737">
    <property type="expression patterns" value="Expressed in blastula and 19 other cell types or tissues"/>
</dbReference>
<dbReference type="GO" id="GO:0005634">
    <property type="term" value="C:nucleus"/>
    <property type="evidence" value="ECO:0007669"/>
    <property type="project" value="UniProtKB-SubCell"/>
</dbReference>
<dbReference type="InterPro" id="IPR031530">
    <property type="entry name" value="UPF0688"/>
</dbReference>
<dbReference type="PANTHER" id="PTHR28491">
    <property type="entry name" value="UPF0688 PROTEIN C1ORF174"/>
    <property type="match status" value="1"/>
</dbReference>
<dbReference type="PANTHER" id="PTHR28491:SF1">
    <property type="entry name" value="UPF0688 PROTEIN C1ORF174"/>
    <property type="match status" value="1"/>
</dbReference>
<dbReference type="Pfam" id="PF15772">
    <property type="entry name" value="UPF0688"/>
    <property type="match status" value="2"/>
</dbReference>
<sequence length="205" mass="22734">MRKRKLSDRVRCSARLKNRSCSGAHSSSDHEADTYGPKKKAVSSKNTDKKSPKKLENDEKGLMESDEQEFINKTDNTASNESNAGNVNTCPSASPFSDLNEVSRNGLTDDSEDGVGFSHKTSSEPSKVREVYLNGSPFVDEDSNQPMPLGLFFENADLMQDLPPAVPCCASMSRREFRNLHFRAKEEEEDDDDDYADGLVNEGNI</sequence>